<gene>
    <name evidence="2" type="primary">purM</name>
    <name type="ordered locus">SBO_2520</name>
</gene>
<proteinExistence type="inferred from homology"/>
<protein>
    <recommendedName>
        <fullName evidence="2">Phosphoribosylformylglycinamidine cyclo-ligase</fullName>
        <ecNumber evidence="2">6.3.3.1</ecNumber>
    </recommendedName>
    <alternativeName>
        <fullName evidence="2">AIR synthase</fullName>
    </alternativeName>
    <alternativeName>
        <fullName evidence="2">AIRS</fullName>
    </alternativeName>
    <alternativeName>
        <fullName evidence="2">Phosphoribosyl-aminoimidazole synthetase</fullName>
    </alternativeName>
</protein>
<dbReference type="EC" id="6.3.3.1" evidence="2"/>
<dbReference type="EMBL" id="CP000036">
    <property type="protein sequence ID" value="ABB67065.1"/>
    <property type="molecule type" value="Genomic_DNA"/>
</dbReference>
<dbReference type="RefSeq" id="WP_001295474.1">
    <property type="nucleotide sequence ID" value="NC_007613.1"/>
</dbReference>
<dbReference type="SMR" id="Q31XZ3"/>
<dbReference type="GeneID" id="93774637"/>
<dbReference type="KEGG" id="sbo:SBO_2520"/>
<dbReference type="HOGENOM" id="CLU_047116_0_0_6"/>
<dbReference type="UniPathway" id="UPA00074">
    <property type="reaction ID" value="UER00129"/>
</dbReference>
<dbReference type="Proteomes" id="UP000007067">
    <property type="component" value="Chromosome"/>
</dbReference>
<dbReference type="GO" id="GO:0005829">
    <property type="term" value="C:cytosol"/>
    <property type="evidence" value="ECO:0007669"/>
    <property type="project" value="TreeGrafter"/>
</dbReference>
<dbReference type="GO" id="GO:0005524">
    <property type="term" value="F:ATP binding"/>
    <property type="evidence" value="ECO:0007669"/>
    <property type="project" value="UniProtKB-KW"/>
</dbReference>
<dbReference type="GO" id="GO:0004637">
    <property type="term" value="F:phosphoribosylamine-glycine ligase activity"/>
    <property type="evidence" value="ECO:0007669"/>
    <property type="project" value="TreeGrafter"/>
</dbReference>
<dbReference type="GO" id="GO:0004641">
    <property type="term" value="F:phosphoribosylformylglycinamidine cyclo-ligase activity"/>
    <property type="evidence" value="ECO:0007669"/>
    <property type="project" value="UniProtKB-UniRule"/>
</dbReference>
<dbReference type="GO" id="GO:0006189">
    <property type="term" value="P:'de novo' IMP biosynthetic process"/>
    <property type="evidence" value="ECO:0007669"/>
    <property type="project" value="UniProtKB-UniRule"/>
</dbReference>
<dbReference type="GO" id="GO:0046084">
    <property type="term" value="P:adenine biosynthetic process"/>
    <property type="evidence" value="ECO:0007669"/>
    <property type="project" value="TreeGrafter"/>
</dbReference>
<dbReference type="CDD" id="cd02196">
    <property type="entry name" value="PurM"/>
    <property type="match status" value="1"/>
</dbReference>
<dbReference type="FunFam" id="3.30.1330.10:FF:000001">
    <property type="entry name" value="Phosphoribosylformylglycinamidine cyclo-ligase"/>
    <property type="match status" value="1"/>
</dbReference>
<dbReference type="FunFam" id="3.90.650.10:FF:000001">
    <property type="entry name" value="Phosphoribosylformylglycinamidine cyclo-ligase"/>
    <property type="match status" value="1"/>
</dbReference>
<dbReference type="Gene3D" id="3.90.650.10">
    <property type="entry name" value="PurM-like C-terminal domain"/>
    <property type="match status" value="1"/>
</dbReference>
<dbReference type="Gene3D" id="3.30.1330.10">
    <property type="entry name" value="PurM-like, N-terminal domain"/>
    <property type="match status" value="1"/>
</dbReference>
<dbReference type="HAMAP" id="MF_00741">
    <property type="entry name" value="AIRS"/>
    <property type="match status" value="1"/>
</dbReference>
<dbReference type="InterPro" id="IPR010918">
    <property type="entry name" value="PurM-like_C_dom"/>
</dbReference>
<dbReference type="InterPro" id="IPR036676">
    <property type="entry name" value="PurM-like_C_sf"/>
</dbReference>
<dbReference type="InterPro" id="IPR016188">
    <property type="entry name" value="PurM-like_N"/>
</dbReference>
<dbReference type="InterPro" id="IPR036921">
    <property type="entry name" value="PurM-like_N_sf"/>
</dbReference>
<dbReference type="InterPro" id="IPR004733">
    <property type="entry name" value="PurM_cligase"/>
</dbReference>
<dbReference type="NCBIfam" id="TIGR00878">
    <property type="entry name" value="purM"/>
    <property type="match status" value="1"/>
</dbReference>
<dbReference type="PANTHER" id="PTHR10520:SF12">
    <property type="entry name" value="TRIFUNCTIONAL PURINE BIOSYNTHETIC PROTEIN ADENOSINE-3"/>
    <property type="match status" value="1"/>
</dbReference>
<dbReference type="PANTHER" id="PTHR10520">
    <property type="entry name" value="TRIFUNCTIONAL PURINE BIOSYNTHETIC PROTEIN ADENOSINE-3-RELATED"/>
    <property type="match status" value="1"/>
</dbReference>
<dbReference type="Pfam" id="PF00586">
    <property type="entry name" value="AIRS"/>
    <property type="match status" value="1"/>
</dbReference>
<dbReference type="Pfam" id="PF02769">
    <property type="entry name" value="AIRS_C"/>
    <property type="match status" value="1"/>
</dbReference>
<dbReference type="SUPFAM" id="SSF56042">
    <property type="entry name" value="PurM C-terminal domain-like"/>
    <property type="match status" value="1"/>
</dbReference>
<dbReference type="SUPFAM" id="SSF55326">
    <property type="entry name" value="PurM N-terminal domain-like"/>
    <property type="match status" value="1"/>
</dbReference>
<comment type="catalytic activity">
    <reaction evidence="2">
        <text>2-formamido-N(1)-(5-O-phospho-beta-D-ribosyl)acetamidine + ATP = 5-amino-1-(5-phospho-beta-D-ribosyl)imidazole + ADP + phosphate + H(+)</text>
        <dbReference type="Rhea" id="RHEA:23032"/>
        <dbReference type="ChEBI" id="CHEBI:15378"/>
        <dbReference type="ChEBI" id="CHEBI:30616"/>
        <dbReference type="ChEBI" id="CHEBI:43474"/>
        <dbReference type="ChEBI" id="CHEBI:137981"/>
        <dbReference type="ChEBI" id="CHEBI:147287"/>
        <dbReference type="ChEBI" id="CHEBI:456216"/>
        <dbReference type="EC" id="6.3.3.1"/>
    </reaction>
</comment>
<comment type="pathway">
    <text evidence="2">Purine metabolism; IMP biosynthesis via de novo pathway; 5-amino-1-(5-phospho-D-ribosyl)imidazole from N(2)-formyl-N(1)-(5-phospho-D-ribosyl)glycinamide: step 2/2.</text>
</comment>
<comment type="subcellular location">
    <subcellularLocation>
        <location evidence="2">Cytoplasm</location>
    </subcellularLocation>
</comment>
<comment type="similarity">
    <text evidence="2">Belongs to the AIR synthase family.</text>
</comment>
<evidence type="ECO:0000250" key="1"/>
<evidence type="ECO:0000255" key="2">
    <source>
        <dbReference type="HAMAP-Rule" id="MF_00741"/>
    </source>
</evidence>
<feature type="initiator methionine" description="Removed" evidence="1">
    <location>
        <position position="1"/>
    </location>
</feature>
<feature type="chain" id="PRO_0000258402" description="Phosphoribosylformylglycinamidine cyclo-ligase">
    <location>
        <begin position="2"/>
        <end position="345"/>
    </location>
</feature>
<keyword id="KW-0067">ATP-binding</keyword>
<keyword id="KW-0963">Cytoplasm</keyword>
<keyword id="KW-0436">Ligase</keyword>
<keyword id="KW-0547">Nucleotide-binding</keyword>
<keyword id="KW-0658">Purine biosynthesis</keyword>
<accession>Q31XZ3</accession>
<name>PUR5_SHIBS</name>
<sequence>MTDKTSLSYKDAGVDIDAGNALVGRIKGVVKKTRRPEVMGGLGGFGALCALPQKYREPVLVSGTDGVGTKLRLAMDLKRHDTIGIDLVAMCVNDLVVQGAEPLFFLDYYATGKLDVDTASAVISGIAEGCLQSGCSLVGGETAEMPGMYHGEDYDVAGFCVGVVEKSEIIDGSKVSDGDVLIALGSSGPHSNGYSLVRKILEVSGCDPQTTELDGKPLADHLLAPTRIYVKSVLELIEKVDVHAIAHLTGGGFWENIPRVLPDNTQAVIDESSWQWPEVFNWLQTAGNVERHEMYRTFNCGVGMIIALPAPEVDKALALLNANGENAWKIGIIKASDSEQRVVIE</sequence>
<reference key="1">
    <citation type="journal article" date="2005" name="Nucleic Acids Res.">
        <title>Genome dynamics and diversity of Shigella species, the etiologic agents of bacillary dysentery.</title>
        <authorList>
            <person name="Yang F."/>
            <person name="Yang J."/>
            <person name="Zhang X."/>
            <person name="Chen L."/>
            <person name="Jiang Y."/>
            <person name="Yan Y."/>
            <person name="Tang X."/>
            <person name="Wang J."/>
            <person name="Xiong Z."/>
            <person name="Dong J."/>
            <person name="Xue Y."/>
            <person name="Zhu Y."/>
            <person name="Xu X."/>
            <person name="Sun L."/>
            <person name="Chen S."/>
            <person name="Nie H."/>
            <person name="Peng J."/>
            <person name="Xu J."/>
            <person name="Wang Y."/>
            <person name="Yuan Z."/>
            <person name="Wen Y."/>
            <person name="Yao Z."/>
            <person name="Shen Y."/>
            <person name="Qiang B."/>
            <person name="Hou Y."/>
            <person name="Yu J."/>
            <person name="Jin Q."/>
        </authorList>
    </citation>
    <scope>NUCLEOTIDE SEQUENCE [LARGE SCALE GENOMIC DNA]</scope>
    <source>
        <strain>Sb227</strain>
    </source>
</reference>
<organism>
    <name type="scientific">Shigella boydii serotype 4 (strain Sb227)</name>
    <dbReference type="NCBI Taxonomy" id="300268"/>
    <lineage>
        <taxon>Bacteria</taxon>
        <taxon>Pseudomonadati</taxon>
        <taxon>Pseudomonadota</taxon>
        <taxon>Gammaproteobacteria</taxon>
        <taxon>Enterobacterales</taxon>
        <taxon>Enterobacteriaceae</taxon>
        <taxon>Shigella</taxon>
    </lineage>
</organism>